<evidence type="ECO:0000255" key="1">
    <source>
        <dbReference type="HAMAP-Rule" id="MF_01331"/>
    </source>
</evidence>
<evidence type="ECO:0000256" key="2">
    <source>
        <dbReference type="SAM" id="MobiDB-lite"/>
    </source>
</evidence>
<evidence type="ECO:0000305" key="3"/>
<reference key="1">
    <citation type="submission" date="2004-12" db="EMBL/GenBank/DDBJ databases">
        <title>The genome sequence of Borrelia hermsii and Borrelia turicatae: comparative analysis of two agents of endemic N. America relapsing fever.</title>
        <authorList>
            <person name="Porcella S.F."/>
            <person name="Raffel S.J."/>
            <person name="Schrumpf M.E."/>
            <person name="Montgomery B."/>
            <person name="Smith T."/>
            <person name="Schwan T.G."/>
        </authorList>
    </citation>
    <scope>NUCLEOTIDE SEQUENCE [LARGE SCALE GENOMIC DNA]</scope>
    <source>
        <strain>HS1 / DAH</strain>
    </source>
</reference>
<name>RL22_BORHD</name>
<gene>
    <name evidence="1" type="primary">rplV</name>
    <name type="ordered locus">BH0483</name>
</gene>
<dbReference type="EMBL" id="CP000048">
    <property type="protein sequence ID" value="AAX16992.1"/>
    <property type="molecule type" value="Genomic_DNA"/>
</dbReference>
<dbReference type="RefSeq" id="WP_012422246.1">
    <property type="nucleotide sequence ID" value="NZ_CP073136.1"/>
</dbReference>
<dbReference type="SMR" id="B2S0I6"/>
<dbReference type="GeneID" id="71843301"/>
<dbReference type="KEGG" id="bhr:BH0483"/>
<dbReference type="HOGENOM" id="CLU_083987_3_1_12"/>
<dbReference type="Proteomes" id="UP000008834">
    <property type="component" value="Chromosome"/>
</dbReference>
<dbReference type="GO" id="GO:0022625">
    <property type="term" value="C:cytosolic large ribosomal subunit"/>
    <property type="evidence" value="ECO:0007669"/>
    <property type="project" value="TreeGrafter"/>
</dbReference>
<dbReference type="GO" id="GO:0019843">
    <property type="term" value="F:rRNA binding"/>
    <property type="evidence" value="ECO:0007669"/>
    <property type="project" value="UniProtKB-UniRule"/>
</dbReference>
<dbReference type="GO" id="GO:0003735">
    <property type="term" value="F:structural constituent of ribosome"/>
    <property type="evidence" value="ECO:0007669"/>
    <property type="project" value="InterPro"/>
</dbReference>
<dbReference type="GO" id="GO:0006412">
    <property type="term" value="P:translation"/>
    <property type="evidence" value="ECO:0007669"/>
    <property type="project" value="UniProtKB-UniRule"/>
</dbReference>
<dbReference type="CDD" id="cd00336">
    <property type="entry name" value="Ribosomal_L22"/>
    <property type="match status" value="1"/>
</dbReference>
<dbReference type="Gene3D" id="3.90.470.10">
    <property type="entry name" value="Ribosomal protein L22/L17"/>
    <property type="match status" value="1"/>
</dbReference>
<dbReference type="HAMAP" id="MF_01331_B">
    <property type="entry name" value="Ribosomal_uL22_B"/>
    <property type="match status" value="1"/>
</dbReference>
<dbReference type="InterPro" id="IPR001063">
    <property type="entry name" value="Ribosomal_uL22"/>
</dbReference>
<dbReference type="InterPro" id="IPR005727">
    <property type="entry name" value="Ribosomal_uL22_bac/chlpt-type"/>
</dbReference>
<dbReference type="InterPro" id="IPR047867">
    <property type="entry name" value="Ribosomal_uL22_bac/org-type"/>
</dbReference>
<dbReference type="InterPro" id="IPR018260">
    <property type="entry name" value="Ribosomal_uL22_CS"/>
</dbReference>
<dbReference type="InterPro" id="IPR036394">
    <property type="entry name" value="Ribosomal_uL22_sf"/>
</dbReference>
<dbReference type="NCBIfam" id="TIGR01044">
    <property type="entry name" value="rplV_bact"/>
    <property type="match status" value="1"/>
</dbReference>
<dbReference type="PANTHER" id="PTHR13501">
    <property type="entry name" value="CHLOROPLAST 50S RIBOSOMAL PROTEIN L22-RELATED"/>
    <property type="match status" value="1"/>
</dbReference>
<dbReference type="PANTHER" id="PTHR13501:SF8">
    <property type="entry name" value="LARGE RIBOSOMAL SUBUNIT PROTEIN UL22M"/>
    <property type="match status" value="1"/>
</dbReference>
<dbReference type="Pfam" id="PF00237">
    <property type="entry name" value="Ribosomal_L22"/>
    <property type="match status" value="1"/>
</dbReference>
<dbReference type="SUPFAM" id="SSF54843">
    <property type="entry name" value="Ribosomal protein L22"/>
    <property type="match status" value="1"/>
</dbReference>
<dbReference type="PROSITE" id="PS00464">
    <property type="entry name" value="RIBOSOMAL_L22"/>
    <property type="match status" value="1"/>
</dbReference>
<organism>
    <name type="scientific">Borrelia hermsii (strain HS1 / DAH)</name>
    <dbReference type="NCBI Taxonomy" id="314723"/>
    <lineage>
        <taxon>Bacteria</taxon>
        <taxon>Pseudomonadati</taxon>
        <taxon>Spirochaetota</taxon>
        <taxon>Spirochaetia</taxon>
        <taxon>Spirochaetales</taxon>
        <taxon>Borreliaceae</taxon>
        <taxon>Borrelia</taxon>
    </lineage>
</organism>
<comment type="function">
    <text evidence="1">This protein binds specifically to 23S rRNA; its binding is stimulated by other ribosomal proteins, e.g. L4, L17, and L20. It is important during the early stages of 50S assembly. It makes multiple contacts with different domains of the 23S rRNA in the assembled 50S subunit and ribosome (By similarity).</text>
</comment>
<comment type="function">
    <text evidence="1">The globular domain of the protein is located near the polypeptide exit tunnel on the outside of the subunit, while an extended beta-hairpin is found that lines the wall of the exit tunnel in the center of the 70S ribosome.</text>
</comment>
<comment type="subunit">
    <text evidence="1">Part of the 50S ribosomal subunit.</text>
</comment>
<comment type="similarity">
    <text evidence="1">Belongs to the universal ribosomal protein uL22 family.</text>
</comment>
<proteinExistence type="inferred from homology"/>
<protein>
    <recommendedName>
        <fullName evidence="1">Large ribosomal subunit protein uL22</fullName>
    </recommendedName>
    <alternativeName>
        <fullName evidence="3">50S ribosomal protein L22</fullName>
    </alternativeName>
</protein>
<accession>B2S0I6</accession>
<feature type="chain" id="PRO_0000354447" description="Large ribosomal subunit protein uL22">
    <location>
        <begin position="1"/>
        <end position="120"/>
    </location>
</feature>
<feature type="region of interest" description="Disordered" evidence="2">
    <location>
        <begin position="1"/>
        <end position="20"/>
    </location>
</feature>
<sequence length="120" mass="13718">MFVNRRYTARGKNLPSSPKKVRPIADNIRGKPYTEAVAILYSMPNKGAKLLGKVVKSAASNAMYHNRNLSEDMIFVKTVMVDDGRKRRSIWPRARGRADRLVNRSCHIFVEVYEKMYGGE</sequence>
<keyword id="KW-0687">Ribonucleoprotein</keyword>
<keyword id="KW-0689">Ribosomal protein</keyword>
<keyword id="KW-0694">RNA-binding</keyword>
<keyword id="KW-0699">rRNA-binding</keyword>